<dbReference type="EMBL" id="BX251412">
    <property type="protein sequence ID" value="CAD67237.1"/>
    <property type="molecule type" value="Genomic_DNA"/>
</dbReference>
<dbReference type="RefSeq" id="WP_011096517.1">
    <property type="nucleotide sequence ID" value="NC_004551.1"/>
</dbReference>
<dbReference type="SMR" id="Q83NF6"/>
<dbReference type="GeneID" id="67388352"/>
<dbReference type="KEGG" id="tws:TW571"/>
<dbReference type="HOGENOM" id="CLU_108953_2_0_11"/>
<dbReference type="GO" id="GO:0005829">
    <property type="term" value="C:cytosol"/>
    <property type="evidence" value="ECO:0007669"/>
    <property type="project" value="TreeGrafter"/>
</dbReference>
<dbReference type="GO" id="GO:0003723">
    <property type="term" value="F:RNA binding"/>
    <property type="evidence" value="ECO:0007669"/>
    <property type="project" value="UniProtKB-UniRule"/>
</dbReference>
<dbReference type="GO" id="GO:0070929">
    <property type="term" value="P:trans-translation"/>
    <property type="evidence" value="ECO:0007669"/>
    <property type="project" value="UniProtKB-UniRule"/>
</dbReference>
<dbReference type="CDD" id="cd09294">
    <property type="entry name" value="SmpB"/>
    <property type="match status" value="1"/>
</dbReference>
<dbReference type="Gene3D" id="2.40.280.10">
    <property type="match status" value="1"/>
</dbReference>
<dbReference type="HAMAP" id="MF_00023">
    <property type="entry name" value="SmpB"/>
    <property type="match status" value="1"/>
</dbReference>
<dbReference type="InterPro" id="IPR023620">
    <property type="entry name" value="SmpB"/>
</dbReference>
<dbReference type="InterPro" id="IPR000037">
    <property type="entry name" value="SsrA-bd_prot"/>
</dbReference>
<dbReference type="InterPro" id="IPR020081">
    <property type="entry name" value="SsrA-bd_prot_CS"/>
</dbReference>
<dbReference type="NCBIfam" id="NF003843">
    <property type="entry name" value="PRK05422.1"/>
    <property type="match status" value="1"/>
</dbReference>
<dbReference type="NCBIfam" id="TIGR00086">
    <property type="entry name" value="smpB"/>
    <property type="match status" value="1"/>
</dbReference>
<dbReference type="PANTHER" id="PTHR30308:SF2">
    <property type="entry name" value="SSRA-BINDING PROTEIN"/>
    <property type="match status" value="1"/>
</dbReference>
<dbReference type="PANTHER" id="PTHR30308">
    <property type="entry name" value="TMRNA-BINDING COMPONENT OF TRANS-TRANSLATION TAGGING COMPLEX"/>
    <property type="match status" value="1"/>
</dbReference>
<dbReference type="Pfam" id="PF01668">
    <property type="entry name" value="SmpB"/>
    <property type="match status" value="1"/>
</dbReference>
<dbReference type="SUPFAM" id="SSF74982">
    <property type="entry name" value="Small protein B (SmpB)"/>
    <property type="match status" value="1"/>
</dbReference>
<dbReference type="PROSITE" id="PS01317">
    <property type="entry name" value="SSRP"/>
    <property type="match status" value="1"/>
</dbReference>
<proteinExistence type="inferred from homology"/>
<protein>
    <recommendedName>
        <fullName evidence="1">SsrA-binding protein</fullName>
    </recommendedName>
    <alternativeName>
        <fullName evidence="1">Small protein B</fullName>
    </alternativeName>
</protein>
<keyword id="KW-0963">Cytoplasm</keyword>
<keyword id="KW-0694">RNA-binding</keyword>
<feature type="chain" id="PRO_0000103060" description="SsrA-binding protein">
    <location>
        <begin position="1"/>
        <end position="211"/>
    </location>
</feature>
<feature type="region of interest" description="Disordered" evidence="2">
    <location>
        <begin position="1"/>
        <end position="20"/>
    </location>
</feature>
<feature type="region of interest" description="Disordered" evidence="2">
    <location>
        <begin position="170"/>
        <end position="211"/>
    </location>
</feature>
<feature type="compositionally biased region" description="Polar residues" evidence="2">
    <location>
        <begin position="177"/>
        <end position="187"/>
    </location>
</feature>
<evidence type="ECO:0000255" key="1">
    <source>
        <dbReference type="HAMAP-Rule" id="MF_00023"/>
    </source>
</evidence>
<evidence type="ECO:0000256" key="2">
    <source>
        <dbReference type="SAM" id="MobiDB-lite"/>
    </source>
</evidence>
<accession>Q83NF6</accession>
<reference key="1">
    <citation type="journal article" date="2003" name="Lancet">
        <title>Sequencing and analysis of the genome of the Whipple's disease bacterium Tropheryma whipplei.</title>
        <authorList>
            <person name="Bentley S.D."/>
            <person name="Maiwald M."/>
            <person name="Murphy L.D."/>
            <person name="Pallen M.J."/>
            <person name="Yeats C.A."/>
            <person name="Dover L.G."/>
            <person name="Norbertczak H.T."/>
            <person name="Besra G.S."/>
            <person name="Quail M.A."/>
            <person name="Harris D.E."/>
            <person name="von Herbay A."/>
            <person name="Goble A."/>
            <person name="Rutter S."/>
            <person name="Squares R."/>
            <person name="Squares S."/>
            <person name="Barrell B.G."/>
            <person name="Parkhill J."/>
            <person name="Relman D.A."/>
        </authorList>
    </citation>
    <scope>NUCLEOTIDE SEQUENCE [LARGE SCALE GENOMIC DNA]</scope>
    <source>
        <strain>TW08/27</strain>
    </source>
</reference>
<organism>
    <name type="scientific">Tropheryma whipplei (strain TW08/27)</name>
    <name type="common">Whipple's bacillus</name>
    <dbReference type="NCBI Taxonomy" id="218496"/>
    <lineage>
        <taxon>Bacteria</taxon>
        <taxon>Bacillati</taxon>
        <taxon>Actinomycetota</taxon>
        <taxon>Actinomycetes</taxon>
        <taxon>Micrococcales</taxon>
        <taxon>Tropherymataceae</taxon>
        <taxon>Tropheryma</taxon>
    </lineage>
</organism>
<name>SSRP_TROW8</name>
<sequence length="211" mass="24747">MHRRSSKSYSSRNSKTPERSKIPDCVIASNKSAEYNYFLDKTFEAGLVLLGSEVKSVRQQKISLSEAYIYEDNSEIWLANLYIPEHKTGGWTNHNPRRLRKLLLHKYQIARLRKDLLIPGITLVPIKFYFRNGRAKLLISLARGKKLIDKREVIKEREATLEANRALKHRLRRPRAQRNTQRSVTPRSTRENKNVQRNKARSARCNVRHEN</sequence>
<gene>
    <name evidence="1" type="primary">smpB</name>
    <name type="ordered locus">TW571</name>
</gene>
<comment type="function">
    <text evidence="1">Required for rescue of stalled ribosomes mediated by trans-translation. Binds to transfer-messenger RNA (tmRNA), required for stable association of tmRNA with ribosomes. tmRNA and SmpB together mimic tRNA shape, replacing the anticodon stem-loop with SmpB. tmRNA is encoded by the ssrA gene; the 2 termini fold to resemble tRNA(Ala) and it encodes a 'tag peptide', a short internal open reading frame. During trans-translation Ala-aminoacylated tmRNA acts like a tRNA, entering the A-site of stalled ribosomes, displacing the stalled mRNA. The ribosome then switches to translate the ORF on the tmRNA; the nascent peptide is terminated with the 'tag peptide' encoded by the tmRNA and targeted for degradation. The ribosome is freed to recommence translation, which seems to be the essential function of trans-translation.</text>
</comment>
<comment type="subcellular location">
    <subcellularLocation>
        <location evidence="1">Cytoplasm</location>
    </subcellularLocation>
    <text evidence="1">The tmRNA-SmpB complex associates with stalled 70S ribosomes.</text>
</comment>
<comment type="similarity">
    <text evidence="1">Belongs to the SmpB family.</text>
</comment>